<feature type="chain" id="PRO_0000097034" description="Sec translocon accessory complex subunit YajC">
    <location>
        <begin position="1"/>
        <end position="142"/>
    </location>
</feature>
<feature type="transmembrane region" description="Helical" evidence="2">
    <location>
        <begin position="33"/>
        <end position="53"/>
    </location>
</feature>
<feature type="region of interest" description="Disordered" evidence="3">
    <location>
        <begin position="1"/>
        <end position="21"/>
    </location>
</feature>
<dbReference type="EMBL" id="AJ235272">
    <property type="protein sequence ID" value="CAA15030.1"/>
    <property type="molecule type" value="Genomic_DNA"/>
</dbReference>
<dbReference type="PIR" id="D71663">
    <property type="entry name" value="D71663"/>
</dbReference>
<dbReference type="RefSeq" id="NP_220954.1">
    <property type="nucleotide sequence ID" value="NC_000963.1"/>
</dbReference>
<dbReference type="RefSeq" id="WP_004597903.1">
    <property type="nucleotide sequence ID" value="NC_000963.1"/>
</dbReference>
<dbReference type="SMR" id="Q9ZCW9"/>
<dbReference type="STRING" id="272947.gene:17555665"/>
<dbReference type="EnsemblBacteria" id="CAA15030">
    <property type="protein sequence ID" value="CAA15030"/>
    <property type="gene ID" value="CAA15030"/>
</dbReference>
<dbReference type="GeneID" id="57569711"/>
<dbReference type="KEGG" id="rpr:RP585"/>
<dbReference type="PATRIC" id="fig|272947.5.peg.601"/>
<dbReference type="eggNOG" id="COG1862">
    <property type="taxonomic scope" value="Bacteria"/>
</dbReference>
<dbReference type="HOGENOM" id="CLU_116157_0_0_5"/>
<dbReference type="OrthoDB" id="9811406at2"/>
<dbReference type="Proteomes" id="UP000002480">
    <property type="component" value="Chromosome"/>
</dbReference>
<dbReference type="GO" id="GO:0005886">
    <property type="term" value="C:plasma membrane"/>
    <property type="evidence" value="ECO:0007669"/>
    <property type="project" value="UniProtKB-SubCell"/>
</dbReference>
<dbReference type="GO" id="GO:0015031">
    <property type="term" value="P:protein transport"/>
    <property type="evidence" value="ECO:0007669"/>
    <property type="project" value="UniProtKB-KW"/>
</dbReference>
<dbReference type="InterPro" id="IPR003849">
    <property type="entry name" value="Preprotein_translocase_YajC"/>
</dbReference>
<dbReference type="NCBIfam" id="TIGR00739">
    <property type="entry name" value="yajC"/>
    <property type="match status" value="1"/>
</dbReference>
<dbReference type="PANTHER" id="PTHR33909">
    <property type="entry name" value="SEC TRANSLOCON ACCESSORY COMPLEX SUBUNIT YAJC"/>
    <property type="match status" value="1"/>
</dbReference>
<dbReference type="PANTHER" id="PTHR33909:SF1">
    <property type="entry name" value="SEC TRANSLOCON ACCESSORY COMPLEX SUBUNIT YAJC"/>
    <property type="match status" value="1"/>
</dbReference>
<dbReference type="Pfam" id="PF02699">
    <property type="entry name" value="YajC"/>
    <property type="match status" value="1"/>
</dbReference>
<dbReference type="PRINTS" id="PR01853">
    <property type="entry name" value="YAJCTRNLCASE"/>
</dbReference>
<dbReference type="SMART" id="SM01323">
    <property type="entry name" value="YajC"/>
    <property type="match status" value="1"/>
</dbReference>
<reference key="1">
    <citation type="journal article" date="1998" name="Nature">
        <title>The genome sequence of Rickettsia prowazekii and the origin of mitochondria.</title>
        <authorList>
            <person name="Andersson S.G.E."/>
            <person name="Zomorodipour A."/>
            <person name="Andersson J.O."/>
            <person name="Sicheritz-Ponten T."/>
            <person name="Alsmark U.C.M."/>
            <person name="Podowski R.M."/>
            <person name="Naeslund A.K."/>
            <person name="Eriksson A.-S."/>
            <person name="Winkler H.H."/>
            <person name="Kurland C.G."/>
        </authorList>
    </citation>
    <scope>NUCLEOTIDE SEQUENCE [LARGE SCALE GENOMIC DNA]</scope>
    <source>
        <strain>Madrid E</strain>
    </source>
</reference>
<organism>
    <name type="scientific">Rickettsia prowazekii (strain Madrid E)</name>
    <dbReference type="NCBI Taxonomy" id="272947"/>
    <lineage>
        <taxon>Bacteria</taxon>
        <taxon>Pseudomonadati</taxon>
        <taxon>Pseudomonadota</taxon>
        <taxon>Alphaproteobacteria</taxon>
        <taxon>Rickettsiales</taxon>
        <taxon>Rickettsiaceae</taxon>
        <taxon>Rickettsieae</taxon>
        <taxon>Rickettsia</taxon>
        <taxon>typhus group</taxon>
    </lineage>
</organism>
<comment type="function">
    <text evidence="1">The SecYEG-SecDF-YajC-YidC holo-translocon (HTL) protein secretase/insertase is a supercomplex required for protein secretion, insertion of proteins into membranes, and assembly of membrane protein complexes. While the SecYEG complex is essential for assembly of a number of proteins and complexes, the SecDF-YajC-YidC subcomplex facilitates these functions.</text>
</comment>
<comment type="subunit">
    <text evidence="1">Part of the SecDF-YidC-YajC translocase complex. The SecDF-YidC-YajC translocase forms a supercomplex with SecYEG, called the holo-translocon (HTL).</text>
</comment>
<comment type="subcellular location">
    <subcellularLocation>
        <location evidence="1">Cell inner membrane</location>
        <topology evidence="1">Single-pass membrane protein</topology>
    </subcellularLocation>
</comment>
<comment type="similarity">
    <text evidence="4">Belongs to the YajC family.</text>
</comment>
<protein>
    <recommendedName>
        <fullName>Sec translocon accessory complex subunit YajC</fullName>
    </recommendedName>
</protein>
<accession>Q9ZCW9</accession>
<sequence>MSQHTQDNQINNNETIEIQETDTVPVETNSLQSGLTSLIPMILIFAVFYFLLLRPQEKRRKEREKLVSGVKKGEEVLINSGIYGIVTKVSENDNNIEIEIAKDVRIKAIKSAIVDITSRKREVAATQENNKKNKKVSCAKSS</sequence>
<evidence type="ECO:0000250" key="1">
    <source>
        <dbReference type="UniProtKB" id="P0ADZ7"/>
    </source>
</evidence>
<evidence type="ECO:0000255" key="2"/>
<evidence type="ECO:0000256" key="3">
    <source>
        <dbReference type="SAM" id="MobiDB-lite"/>
    </source>
</evidence>
<evidence type="ECO:0000305" key="4"/>
<keyword id="KW-0997">Cell inner membrane</keyword>
<keyword id="KW-1003">Cell membrane</keyword>
<keyword id="KW-0472">Membrane</keyword>
<keyword id="KW-0653">Protein transport</keyword>
<keyword id="KW-1185">Reference proteome</keyword>
<keyword id="KW-0811">Translocation</keyword>
<keyword id="KW-0812">Transmembrane</keyword>
<keyword id="KW-1133">Transmembrane helix</keyword>
<keyword id="KW-0813">Transport</keyword>
<gene>
    <name type="primary">yajC</name>
    <name type="ordered locus">RP585</name>
</gene>
<proteinExistence type="inferred from homology"/>
<name>YAJC_RICPR</name>